<proteinExistence type="inferred from homology"/>
<comment type="function">
    <text evidence="1">Is required not only for elongation of protein synthesis but also for the initiation of all mRNA translation through initiator tRNA(fMet) aminoacylation.</text>
</comment>
<comment type="catalytic activity">
    <reaction evidence="1">
        <text>tRNA(Met) + L-methionine + ATP = L-methionyl-tRNA(Met) + AMP + diphosphate</text>
        <dbReference type="Rhea" id="RHEA:13481"/>
        <dbReference type="Rhea" id="RHEA-COMP:9667"/>
        <dbReference type="Rhea" id="RHEA-COMP:9698"/>
        <dbReference type="ChEBI" id="CHEBI:30616"/>
        <dbReference type="ChEBI" id="CHEBI:33019"/>
        <dbReference type="ChEBI" id="CHEBI:57844"/>
        <dbReference type="ChEBI" id="CHEBI:78442"/>
        <dbReference type="ChEBI" id="CHEBI:78530"/>
        <dbReference type="ChEBI" id="CHEBI:456215"/>
        <dbReference type="EC" id="6.1.1.10"/>
    </reaction>
</comment>
<comment type="cofactor">
    <cofactor evidence="1">
        <name>Zn(2+)</name>
        <dbReference type="ChEBI" id="CHEBI:29105"/>
    </cofactor>
    <text evidence="1">Binds 1 zinc ion per subunit.</text>
</comment>
<comment type="subunit">
    <text evidence="1">Homodimer.</text>
</comment>
<comment type="subcellular location">
    <subcellularLocation>
        <location evidence="1">Cytoplasm</location>
    </subcellularLocation>
</comment>
<comment type="similarity">
    <text evidence="1">Belongs to the class-I aminoacyl-tRNA synthetase family. MetG type 1 subfamily.</text>
</comment>
<accession>A5UF42</accession>
<keyword id="KW-0030">Aminoacyl-tRNA synthetase</keyword>
<keyword id="KW-0067">ATP-binding</keyword>
<keyword id="KW-0963">Cytoplasm</keyword>
<keyword id="KW-0436">Ligase</keyword>
<keyword id="KW-0479">Metal-binding</keyword>
<keyword id="KW-0547">Nucleotide-binding</keyword>
<keyword id="KW-0648">Protein biosynthesis</keyword>
<keyword id="KW-0694">RNA-binding</keyword>
<keyword id="KW-0820">tRNA-binding</keyword>
<keyword id="KW-0862">Zinc</keyword>
<feature type="chain" id="PRO_0000331834" description="Methionine--tRNA ligase">
    <location>
        <begin position="1"/>
        <end position="682"/>
    </location>
</feature>
<feature type="domain" description="tRNA-binding" evidence="1">
    <location>
        <begin position="580"/>
        <end position="682"/>
    </location>
</feature>
<feature type="short sequence motif" description="'HIGH' region">
    <location>
        <begin position="15"/>
        <end position="25"/>
    </location>
</feature>
<feature type="short sequence motif" description="'KMSKS' region">
    <location>
        <begin position="331"/>
        <end position="335"/>
    </location>
</feature>
<feature type="binding site" evidence="1">
    <location>
        <position position="146"/>
    </location>
    <ligand>
        <name>Zn(2+)</name>
        <dbReference type="ChEBI" id="CHEBI:29105"/>
    </ligand>
</feature>
<feature type="binding site" evidence="1">
    <location>
        <position position="149"/>
    </location>
    <ligand>
        <name>Zn(2+)</name>
        <dbReference type="ChEBI" id="CHEBI:29105"/>
    </ligand>
</feature>
<feature type="binding site" evidence="1">
    <location>
        <position position="159"/>
    </location>
    <ligand>
        <name>Zn(2+)</name>
        <dbReference type="ChEBI" id="CHEBI:29105"/>
    </ligand>
</feature>
<feature type="binding site" evidence="1">
    <location>
        <position position="162"/>
    </location>
    <ligand>
        <name>Zn(2+)</name>
        <dbReference type="ChEBI" id="CHEBI:29105"/>
    </ligand>
</feature>
<feature type="binding site" evidence="1">
    <location>
        <position position="334"/>
    </location>
    <ligand>
        <name>ATP</name>
        <dbReference type="ChEBI" id="CHEBI:30616"/>
    </ligand>
</feature>
<evidence type="ECO:0000255" key="1">
    <source>
        <dbReference type="HAMAP-Rule" id="MF_00098"/>
    </source>
</evidence>
<reference key="1">
    <citation type="journal article" date="2007" name="Genome Biol.">
        <title>Characterization and modeling of the Haemophilus influenzae core and supragenomes based on the complete genomic sequences of Rd and 12 clinical nontypeable strains.</title>
        <authorList>
            <person name="Hogg J.S."/>
            <person name="Hu F.Z."/>
            <person name="Janto B."/>
            <person name="Boissy R."/>
            <person name="Hayes J."/>
            <person name="Keefe R."/>
            <person name="Post J.C."/>
            <person name="Ehrlich G.D."/>
        </authorList>
    </citation>
    <scope>NUCLEOTIDE SEQUENCE [LARGE SCALE GENOMIC DNA]</scope>
    <source>
        <strain>PittGG</strain>
    </source>
</reference>
<sequence length="682" mass="76949">MTTQPRKILVTCALPYANGAIHLGHMLEHIQADIWVRFQRMRGNKIHFVCADDAHGTPIMLNADKLGITPEELIAKAKADHIRDFAGFNISFDNYHSTHSEENKQLTAEIYNKLKANGFIKSKVISQLFDPEKNMFLPDRFVKGTCPKCKAEDQYGDNCEVCASTYSPMDLINPRSAVSGTTPIVKESEHFFFDLPAFEGMLKEWTRSGSLQSEIANKMQEWFESGLQQWDISRDAPYFGFEIPGAKDKFFYVWLDAPIGYMASFKNLCNREGIDFNEFWAEGSDAELYHFIGKDIVYFHSLFWPAMLEGSGYRKPTNVFAHGYVTVDGAKMSKSRGTFIQASTYLNHIDPECLRYYYAAKLNDRIEDLDFNLDDFVQRVNTDIVNKLVNLASRNAGFIAKRFESKLADKLEDESLFAEFTAQAEQIAAYYESREYNKAIREIMALTDKANKYIDEKAPWVIAKEEGKEAELQAVCSMGIELFRVLMSYLKPVLPKLAERAEAFLQAELRWDNIHQPLLGHTLAPFKALFSRLEKKQIDAVVEETKALFAAANKAAEKTEAKPTALSAVEPIAETITIDDFAKLDMRVAKVLKCEAVPESNKLLRFELDLGDHTRQVFSGIKAAYNKPEELEGRFVIMVANLAPRKMKFGVSEGMILSAGTGGSDLFLLSADNGVTAGMQVK</sequence>
<organism>
    <name type="scientific">Haemophilus influenzae (strain PittGG)</name>
    <dbReference type="NCBI Taxonomy" id="374931"/>
    <lineage>
        <taxon>Bacteria</taxon>
        <taxon>Pseudomonadati</taxon>
        <taxon>Pseudomonadota</taxon>
        <taxon>Gammaproteobacteria</taxon>
        <taxon>Pasteurellales</taxon>
        <taxon>Pasteurellaceae</taxon>
        <taxon>Haemophilus</taxon>
    </lineage>
</organism>
<dbReference type="EC" id="6.1.1.10" evidence="1"/>
<dbReference type="EMBL" id="CP000672">
    <property type="protein sequence ID" value="ABQ99397.1"/>
    <property type="molecule type" value="Genomic_DNA"/>
</dbReference>
<dbReference type="SMR" id="A5UF42"/>
<dbReference type="KEGG" id="hiq:CGSHiGG_01600"/>
<dbReference type="HOGENOM" id="CLU_009710_7_0_6"/>
<dbReference type="Proteomes" id="UP000001990">
    <property type="component" value="Chromosome"/>
</dbReference>
<dbReference type="GO" id="GO:0005829">
    <property type="term" value="C:cytosol"/>
    <property type="evidence" value="ECO:0007669"/>
    <property type="project" value="TreeGrafter"/>
</dbReference>
<dbReference type="GO" id="GO:0005524">
    <property type="term" value="F:ATP binding"/>
    <property type="evidence" value="ECO:0007669"/>
    <property type="project" value="UniProtKB-UniRule"/>
</dbReference>
<dbReference type="GO" id="GO:0046872">
    <property type="term" value="F:metal ion binding"/>
    <property type="evidence" value="ECO:0007669"/>
    <property type="project" value="UniProtKB-KW"/>
</dbReference>
<dbReference type="GO" id="GO:0004825">
    <property type="term" value="F:methionine-tRNA ligase activity"/>
    <property type="evidence" value="ECO:0007669"/>
    <property type="project" value="UniProtKB-UniRule"/>
</dbReference>
<dbReference type="GO" id="GO:0000049">
    <property type="term" value="F:tRNA binding"/>
    <property type="evidence" value="ECO:0007669"/>
    <property type="project" value="UniProtKB-KW"/>
</dbReference>
<dbReference type="GO" id="GO:0006431">
    <property type="term" value="P:methionyl-tRNA aminoacylation"/>
    <property type="evidence" value="ECO:0007669"/>
    <property type="project" value="UniProtKB-UniRule"/>
</dbReference>
<dbReference type="CDD" id="cd07957">
    <property type="entry name" value="Anticodon_Ia_Met"/>
    <property type="match status" value="1"/>
</dbReference>
<dbReference type="CDD" id="cd00814">
    <property type="entry name" value="MetRS_core"/>
    <property type="match status" value="1"/>
</dbReference>
<dbReference type="CDD" id="cd02800">
    <property type="entry name" value="tRNA_bind_EcMetRS_like"/>
    <property type="match status" value="1"/>
</dbReference>
<dbReference type="FunFam" id="1.10.730.10:FF:000005">
    <property type="entry name" value="Methionine--tRNA ligase"/>
    <property type="match status" value="1"/>
</dbReference>
<dbReference type="FunFam" id="2.20.28.20:FF:000001">
    <property type="entry name" value="Methionine--tRNA ligase"/>
    <property type="match status" value="1"/>
</dbReference>
<dbReference type="FunFam" id="2.40.50.140:FF:000042">
    <property type="entry name" value="Methionine--tRNA ligase"/>
    <property type="match status" value="1"/>
</dbReference>
<dbReference type="Gene3D" id="3.40.50.620">
    <property type="entry name" value="HUPs"/>
    <property type="match status" value="1"/>
</dbReference>
<dbReference type="Gene3D" id="1.10.730.10">
    <property type="entry name" value="Isoleucyl-tRNA Synthetase, Domain 1"/>
    <property type="match status" value="1"/>
</dbReference>
<dbReference type="Gene3D" id="2.20.28.20">
    <property type="entry name" value="Methionyl-tRNA synthetase, Zn-domain"/>
    <property type="match status" value="1"/>
</dbReference>
<dbReference type="Gene3D" id="2.40.50.140">
    <property type="entry name" value="Nucleic acid-binding proteins"/>
    <property type="match status" value="1"/>
</dbReference>
<dbReference type="HAMAP" id="MF_00098">
    <property type="entry name" value="Met_tRNA_synth_type1"/>
    <property type="match status" value="1"/>
</dbReference>
<dbReference type="InterPro" id="IPR001412">
    <property type="entry name" value="aa-tRNA-synth_I_CS"/>
</dbReference>
<dbReference type="InterPro" id="IPR041872">
    <property type="entry name" value="Anticodon_Met"/>
</dbReference>
<dbReference type="InterPro" id="IPR004495">
    <property type="entry name" value="Met-tRNA-synth_bsu_C"/>
</dbReference>
<dbReference type="InterPro" id="IPR023458">
    <property type="entry name" value="Met-tRNA_ligase_1"/>
</dbReference>
<dbReference type="InterPro" id="IPR014758">
    <property type="entry name" value="Met-tRNA_synth"/>
</dbReference>
<dbReference type="InterPro" id="IPR015413">
    <property type="entry name" value="Methionyl/Leucyl_tRNA_Synth"/>
</dbReference>
<dbReference type="InterPro" id="IPR033911">
    <property type="entry name" value="MetRS_core"/>
</dbReference>
<dbReference type="InterPro" id="IPR029038">
    <property type="entry name" value="MetRS_Zn"/>
</dbReference>
<dbReference type="InterPro" id="IPR012340">
    <property type="entry name" value="NA-bd_OB-fold"/>
</dbReference>
<dbReference type="InterPro" id="IPR014729">
    <property type="entry name" value="Rossmann-like_a/b/a_fold"/>
</dbReference>
<dbReference type="InterPro" id="IPR002547">
    <property type="entry name" value="tRNA-bd_dom"/>
</dbReference>
<dbReference type="InterPro" id="IPR009080">
    <property type="entry name" value="tRNAsynth_Ia_anticodon-bd"/>
</dbReference>
<dbReference type="NCBIfam" id="TIGR00398">
    <property type="entry name" value="metG"/>
    <property type="match status" value="1"/>
</dbReference>
<dbReference type="NCBIfam" id="TIGR00399">
    <property type="entry name" value="metG_C_term"/>
    <property type="match status" value="1"/>
</dbReference>
<dbReference type="NCBIfam" id="NF001100">
    <property type="entry name" value="PRK00133.1"/>
    <property type="match status" value="1"/>
</dbReference>
<dbReference type="PANTHER" id="PTHR45765">
    <property type="entry name" value="METHIONINE--TRNA LIGASE"/>
    <property type="match status" value="1"/>
</dbReference>
<dbReference type="PANTHER" id="PTHR45765:SF1">
    <property type="entry name" value="METHIONINE--TRNA LIGASE, CYTOPLASMIC"/>
    <property type="match status" value="1"/>
</dbReference>
<dbReference type="Pfam" id="PF19303">
    <property type="entry name" value="Anticodon_3"/>
    <property type="match status" value="1"/>
</dbReference>
<dbReference type="Pfam" id="PF09334">
    <property type="entry name" value="tRNA-synt_1g"/>
    <property type="match status" value="1"/>
</dbReference>
<dbReference type="Pfam" id="PF01588">
    <property type="entry name" value="tRNA_bind"/>
    <property type="match status" value="1"/>
</dbReference>
<dbReference type="PRINTS" id="PR01041">
    <property type="entry name" value="TRNASYNTHMET"/>
</dbReference>
<dbReference type="SUPFAM" id="SSF47323">
    <property type="entry name" value="Anticodon-binding domain of a subclass of class I aminoacyl-tRNA synthetases"/>
    <property type="match status" value="1"/>
</dbReference>
<dbReference type="SUPFAM" id="SSF57770">
    <property type="entry name" value="Methionyl-tRNA synthetase (MetRS), Zn-domain"/>
    <property type="match status" value="1"/>
</dbReference>
<dbReference type="SUPFAM" id="SSF50249">
    <property type="entry name" value="Nucleic acid-binding proteins"/>
    <property type="match status" value="1"/>
</dbReference>
<dbReference type="SUPFAM" id="SSF52374">
    <property type="entry name" value="Nucleotidylyl transferase"/>
    <property type="match status" value="1"/>
</dbReference>
<dbReference type="PROSITE" id="PS00178">
    <property type="entry name" value="AA_TRNA_LIGASE_I"/>
    <property type="match status" value="1"/>
</dbReference>
<dbReference type="PROSITE" id="PS50886">
    <property type="entry name" value="TRBD"/>
    <property type="match status" value="1"/>
</dbReference>
<protein>
    <recommendedName>
        <fullName evidence="1">Methionine--tRNA ligase</fullName>
        <ecNumber evidence="1">6.1.1.10</ecNumber>
    </recommendedName>
    <alternativeName>
        <fullName evidence="1">Methionyl-tRNA synthetase</fullName>
        <shortName evidence="1">MetRS</shortName>
    </alternativeName>
</protein>
<gene>
    <name evidence="1" type="primary">metG</name>
    <name type="ordered locus">CGSHiGG_01600</name>
</gene>
<name>SYM_HAEIG</name>